<feature type="chain" id="PRO_0000166566" description="GTP pyrophosphokinase">
    <location>
        <begin position="1"/>
        <end position="744"/>
    </location>
</feature>
<feature type="domain" description="HD" evidence="2">
    <location>
        <begin position="54"/>
        <end position="159"/>
    </location>
</feature>
<feature type="domain" description="TGS" evidence="3">
    <location>
        <begin position="403"/>
        <end position="464"/>
    </location>
</feature>
<feature type="domain" description="ACT" evidence="1">
    <location>
        <begin position="669"/>
        <end position="744"/>
    </location>
</feature>
<gene>
    <name type="primary">relA</name>
</gene>
<accession>P55133</accession>
<sequence length="744" mass="84546">MVAVRGAHLKENTTFELVSWVESLRQDAKVSSRIEGTYQRCIELAAEQENGPLLLWRGRELVEILVTLSMDADTLIAALLYPLVEGGCYSTDALKEEYSGTILHLVQGVEQMCAISQLKSTAEETAQAAQVDNIRRMLLSMVDDFRCVVIKLAERICNLREVKDQPDEVRRAAAQECANIYAPLANRLGIGQLKWEIEDYAFRYQHPDTYKQIAKQLSERRIDREDYITHFVDDLSDAMKASNIRAEVQGRPKHIYSIWRKMQKKSLEFDELFDVRAVRIVAEELQDCYAALGVVHTKYRHLPKEFDDYVANPKPNGYQSIHTVVLGPEGKTIEIQIRTKQMHEESELGVAAHWKYKEGTASGGAQSAYDEKINWLRKLLAWQEEMSDSGEMLDELRSQVFDDRVYAFTPKGDVVDLPSNATPLDFAYHIHSEVGHRCIGAKVEGRIVPFTYHLQMGDQVEIITQKEPNPSRDWLNPNLGFVTSSRARAKVHAWFRKQDRDKNIIAGKEILEAELVKIHATLKDAQYYAAKRFNVKSPEELYAGIGSGDLRINQVINHINALVNKPTAEEEDQQLLEKLSEASNKQATSHKKPQRDAVVVEGVDNLMTHLARCCQPIPGDDIQGFVTQGRGISVHRMDCEQLEELRHHAPERIIDTVWGGGFVGNYTITVRVTASERNGLLKELTNTLMNEKVKVAGMKSRVDYKKQMSIMDFELELTDLEVLGRVLKRIEQVKDVAEAKRLYG</sequence>
<proteinExistence type="inferred from homology"/>
<name>RELA_PHOAS</name>
<evidence type="ECO:0000255" key="1">
    <source>
        <dbReference type="PROSITE-ProRule" id="PRU01007"/>
    </source>
</evidence>
<evidence type="ECO:0000255" key="2">
    <source>
        <dbReference type="PROSITE-ProRule" id="PRU01175"/>
    </source>
</evidence>
<evidence type="ECO:0000255" key="3">
    <source>
        <dbReference type="PROSITE-ProRule" id="PRU01228"/>
    </source>
</evidence>
<evidence type="ECO:0000269" key="4">
    <source>
    </source>
</evidence>
<evidence type="ECO:0000305" key="5"/>
<comment type="function">
    <text>In eubacteria ppGpp (guanosine 3'-diphosphate 5'-diphosphate) is a mediator of the stringent response that coordinates a variety of cellular activities in response to changes in nutritional abundance. This enzyme catalyzes the formation of pppGpp which is then hydrolyzed to form ppGpp. Also plays a role in the reductive division that occurs during the initial phase of nutrient starvation.</text>
</comment>
<comment type="catalytic activity">
    <reaction>
        <text>GTP + ATP = guanosine 3'-diphosphate 5'-triphosphate + AMP</text>
        <dbReference type="Rhea" id="RHEA:22088"/>
        <dbReference type="ChEBI" id="CHEBI:30616"/>
        <dbReference type="ChEBI" id="CHEBI:37565"/>
        <dbReference type="ChEBI" id="CHEBI:142410"/>
        <dbReference type="ChEBI" id="CHEBI:456215"/>
        <dbReference type="EC" id="2.7.6.5"/>
    </reaction>
</comment>
<comment type="pathway">
    <text>Purine metabolism; ppGpp biosynthesis; ppGpp from GTP: step 1/2.</text>
</comment>
<comment type="disruption phenotype">
    <text evidence="4">Mutants remain rod shaped, and do not acquire the typical coccoid morphology usually seen during starvation.</text>
</comment>
<comment type="similarity">
    <text evidence="5">Belongs to the RelA/SpoT family.</text>
</comment>
<keyword id="KW-0067">ATP-binding</keyword>
<keyword id="KW-0342">GTP-binding</keyword>
<keyword id="KW-0418">Kinase</keyword>
<keyword id="KW-0547">Nucleotide-binding</keyword>
<keyword id="KW-0808">Transferase</keyword>
<organism>
    <name type="scientific">Photobacterium angustum (strain S14 / CCUG 15956)</name>
    <name type="common">Vibrio sp. (strain S14 / CCUG 15956)</name>
    <dbReference type="NCBI Taxonomy" id="314292"/>
    <lineage>
        <taxon>Bacteria</taxon>
        <taxon>Pseudomonadati</taxon>
        <taxon>Pseudomonadota</taxon>
        <taxon>Gammaproteobacteria</taxon>
        <taxon>Vibrionales</taxon>
        <taxon>Vibrionaceae</taxon>
        <taxon>Photobacterium</taxon>
    </lineage>
</organism>
<reference key="1">
    <citation type="journal article" date="1994" name="J. Bacteriol.">
        <title>Stringent control during carbon starvation of marine Vibrio sp. strain S14: molecular cloning, nucleotide sequence, and deletion of the relA gene.</title>
        <authorList>
            <person name="Flaerdh K."/>
            <person name="Axberg T."/>
            <person name="Albertson N.H."/>
            <person name="Kjelleberg S."/>
        </authorList>
    </citation>
    <scope>NUCLEOTIDE SEQUENCE [GENOMIC DNA]</scope>
    <scope>DISRUPTION PHENOTYPE</scope>
</reference>
<protein>
    <recommendedName>
        <fullName>GTP pyrophosphokinase</fullName>
        <ecNumber>2.7.6.5</ecNumber>
    </recommendedName>
    <alternativeName>
        <fullName>(p)ppGpp synthase</fullName>
    </alternativeName>
    <alternativeName>
        <fullName>ATP:GTP 3'-pyrophosphotransferase</fullName>
    </alternativeName>
    <alternativeName>
        <fullName>ppGpp synthase I</fullName>
    </alternativeName>
</protein>
<dbReference type="EC" id="2.7.6.5"/>
<dbReference type="EMBL" id="U13769">
    <property type="protein sequence ID" value="AAA62208.1"/>
    <property type="molecule type" value="Genomic_DNA"/>
</dbReference>
<dbReference type="RefSeq" id="WP_005371455.1">
    <property type="nucleotide sequence ID" value="NZ_CH902602.1"/>
</dbReference>
<dbReference type="SMR" id="P55133"/>
<dbReference type="GeneID" id="61230661"/>
<dbReference type="eggNOG" id="COG0317">
    <property type="taxonomic scope" value="Bacteria"/>
</dbReference>
<dbReference type="OrthoDB" id="9805041at2"/>
<dbReference type="UniPathway" id="UPA00908">
    <property type="reaction ID" value="UER00884"/>
</dbReference>
<dbReference type="GO" id="GO:0005886">
    <property type="term" value="C:plasma membrane"/>
    <property type="evidence" value="ECO:0007669"/>
    <property type="project" value="TreeGrafter"/>
</dbReference>
<dbReference type="GO" id="GO:0005524">
    <property type="term" value="F:ATP binding"/>
    <property type="evidence" value="ECO:0007669"/>
    <property type="project" value="UniProtKB-KW"/>
</dbReference>
<dbReference type="GO" id="GO:0005525">
    <property type="term" value="F:GTP binding"/>
    <property type="evidence" value="ECO:0007669"/>
    <property type="project" value="UniProtKB-KW"/>
</dbReference>
<dbReference type="GO" id="GO:0008728">
    <property type="term" value="F:GTP diphosphokinase activity"/>
    <property type="evidence" value="ECO:0007669"/>
    <property type="project" value="UniProtKB-EC"/>
</dbReference>
<dbReference type="GO" id="GO:0008893">
    <property type="term" value="F:guanosine-3',5'-bis(diphosphate) 3'-diphosphatase activity"/>
    <property type="evidence" value="ECO:0007669"/>
    <property type="project" value="TreeGrafter"/>
</dbReference>
<dbReference type="GO" id="GO:0016301">
    <property type="term" value="F:kinase activity"/>
    <property type="evidence" value="ECO:0007669"/>
    <property type="project" value="UniProtKB-KW"/>
</dbReference>
<dbReference type="GO" id="GO:0015970">
    <property type="term" value="P:guanosine tetraphosphate biosynthetic process"/>
    <property type="evidence" value="ECO:0007669"/>
    <property type="project" value="UniProtKB-UniPathway"/>
</dbReference>
<dbReference type="GO" id="GO:0042594">
    <property type="term" value="P:response to starvation"/>
    <property type="evidence" value="ECO:0007669"/>
    <property type="project" value="TreeGrafter"/>
</dbReference>
<dbReference type="CDD" id="cd04876">
    <property type="entry name" value="ACT_RelA-SpoT"/>
    <property type="match status" value="1"/>
</dbReference>
<dbReference type="CDD" id="cd05399">
    <property type="entry name" value="NT_Rel-Spo_like"/>
    <property type="match status" value="1"/>
</dbReference>
<dbReference type="CDD" id="cd01668">
    <property type="entry name" value="TGS_RSH"/>
    <property type="match status" value="1"/>
</dbReference>
<dbReference type="FunFam" id="3.10.20.30:FF:000002">
    <property type="entry name" value="GTP pyrophosphokinase (RelA/SpoT)"/>
    <property type="match status" value="1"/>
</dbReference>
<dbReference type="FunFam" id="3.30.460.10:FF:000001">
    <property type="entry name" value="GTP pyrophosphokinase RelA"/>
    <property type="match status" value="1"/>
</dbReference>
<dbReference type="Gene3D" id="3.10.20.30">
    <property type="match status" value="1"/>
</dbReference>
<dbReference type="Gene3D" id="3.30.70.260">
    <property type="match status" value="1"/>
</dbReference>
<dbReference type="Gene3D" id="3.30.460.10">
    <property type="entry name" value="Beta Polymerase, domain 2"/>
    <property type="match status" value="1"/>
</dbReference>
<dbReference type="Gene3D" id="1.10.3210.10">
    <property type="entry name" value="Hypothetical protein af1432"/>
    <property type="match status" value="1"/>
</dbReference>
<dbReference type="InterPro" id="IPR045865">
    <property type="entry name" value="ACT-like_dom_sf"/>
</dbReference>
<dbReference type="InterPro" id="IPR002912">
    <property type="entry name" value="ACT_dom"/>
</dbReference>
<dbReference type="InterPro" id="IPR012675">
    <property type="entry name" value="Beta-grasp_dom_sf"/>
</dbReference>
<dbReference type="InterPro" id="IPR006674">
    <property type="entry name" value="HD_domain"/>
</dbReference>
<dbReference type="InterPro" id="IPR043519">
    <property type="entry name" value="NT_sf"/>
</dbReference>
<dbReference type="InterPro" id="IPR004811">
    <property type="entry name" value="RelA/Spo_fam"/>
</dbReference>
<dbReference type="InterPro" id="IPR045600">
    <property type="entry name" value="RelA/SpoT_AH_RIS"/>
</dbReference>
<dbReference type="InterPro" id="IPR007685">
    <property type="entry name" value="RelA_SpoT"/>
</dbReference>
<dbReference type="InterPro" id="IPR004095">
    <property type="entry name" value="TGS"/>
</dbReference>
<dbReference type="InterPro" id="IPR012676">
    <property type="entry name" value="TGS-like"/>
</dbReference>
<dbReference type="InterPro" id="IPR033655">
    <property type="entry name" value="TGS_RelA/SpoT"/>
</dbReference>
<dbReference type="NCBIfam" id="NF008124">
    <property type="entry name" value="PRK10872.1"/>
    <property type="match status" value="1"/>
</dbReference>
<dbReference type="NCBIfam" id="TIGR00691">
    <property type="entry name" value="spoT_relA"/>
    <property type="match status" value="1"/>
</dbReference>
<dbReference type="PANTHER" id="PTHR21262:SF31">
    <property type="entry name" value="GTP PYROPHOSPHOKINASE"/>
    <property type="match status" value="1"/>
</dbReference>
<dbReference type="PANTHER" id="PTHR21262">
    <property type="entry name" value="GUANOSINE-3',5'-BIS DIPHOSPHATE 3'-PYROPHOSPHOHYDROLASE"/>
    <property type="match status" value="1"/>
</dbReference>
<dbReference type="Pfam" id="PF13291">
    <property type="entry name" value="ACT_4"/>
    <property type="match status" value="1"/>
</dbReference>
<dbReference type="Pfam" id="PF13328">
    <property type="entry name" value="HD_4"/>
    <property type="match status" value="1"/>
</dbReference>
<dbReference type="Pfam" id="PF19296">
    <property type="entry name" value="RelA_AH_RIS"/>
    <property type="match status" value="1"/>
</dbReference>
<dbReference type="Pfam" id="PF04607">
    <property type="entry name" value="RelA_SpoT"/>
    <property type="match status" value="1"/>
</dbReference>
<dbReference type="Pfam" id="PF02824">
    <property type="entry name" value="TGS"/>
    <property type="match status" value="1"/>
</dbReference>
<dbReference type="SMART" id="SM00954">
    <property type="entry name" value="RelA_SpoT"/>
    <property type="match status" value="1"/>
</dbReference>
<dbReference type="SUPFAM" id="SSF55021">
    <property type="entry name" value="ACT-like"/>
    <property type="match status" value="1"/>
</dbReference>
<dbReference type="SUPFAM" id="SSF109604">
    <property type="entry name" value="HD-domain/PDEase-like"/>
    <property type="match status" value="1"/>
</dbReference>
<dbReference type="SUPFAM" id="SSF81301">
    <property type="entry name" value="Nucleotidyltransferase"/>
    <property type="match status" value="1"/>
</dbReference>
<dbReference type="SUPFAM" id="SSF81271">
    <property type="entry name" value="TGS-like"/>
    <property type="match status" value="1"/>
</dbReference>
<dbReference type="PROSITE" id="PS51671">
    <property type="entry name" value="ACT"/>
    <property type="match status" value="1"/>
</dbReference>
<dbReference type="PROSITE" id="PS51831">
    <property type="entry name" value="HD"/>
    <property type="match status" value="1"/>
</dbReference>
<dbReference type="PROSITE" id="PS51880">
    <property type="entry name" value="TGS"/>
    <property type="match status" value="1"/>
</dbReference>